<reference key="1">
    <citation type="journal article" date="2009" name="PLoS Genet.">
        <title>Organised genome dynamics in the Escherichia coli species results in highly diverse adaptive paths.</title>
        <authorList>
            <person name="Touchon M."/>
            <person name="Hoede C."/>
            <person name="Tenaillon O."/>
            <person name="Barbe V."/>
            <person name="Baeriswyl S."/>
            <person name="Bidet P."/>
            <person name="Bingen E."/>
            <person name="Bonacorsi S."/>
            <person name="Bouchier C."/>
            <person name="Bouvet O."/>
            <person name="Calteau A."/>
            <person name="Chiapello H."/>
            <person name="Clermont O."/>
            <person name="Cruveiller S."/>
            <person name="Danchin A."/>
            <person name="Diard M."/>
            <person name="Dossat C."/>
            <person name="Karoui M.E."/>
            <person name="Frapy E."/>
            <person name="Garry L."/>
            <person name="Ghigo J.M."/>
            <person name="Gilles A.M."/>
            <person name="Johnson J."/>
            <person name="Le Bouguenec C."/>
            <person name="Lescat M."/>
            <person name="Mangenot S."/>
            <person name="Martinez-Jehanne V."/>
            <person name="Matic I."/>
            <person name="Nassif X."/>
            <person name="Oztas S."/>
            <person name="Petit M.A."/>
            <person name="Pichon C."/>
            <person name="Rouy Z."/>
            <person name="Ruf C.S."/>
            <person name="Schneider D."/>
            <person name="Tourret J."/>
            <person name="Vacherie B."/>
            <person name="Vallenet D."/>
            <person name="Medigue C."/>
            <person name="Rocha E.P.C."/>
            <person name="Denamur E."/>
        </authorList>
    </citation>
    <scope>NUCLEOTIDE SEQUENCE [LARGE SCALE GENOMIC DNA]</scope>
    <source>
        <strain>IAI1</strain>
    </source>
</reference>
<gene>
    <name evidence="1" type="primary">mtfA</name>
    <name type="ordered locus">ECIAI1_2057</name>
</gene>
<evidence type="ECO:0000255" key="1">
    <source>
        <dbReference type="HAMAP-Rule" id="MF_01593"/>
    </source>
</evidence>
<keyword id="KW-0031">Aminopeptidase</keyword>
<keyword id="KW-0963">Cytoplasm</keyword>
<keyword id="KW-0378">Hydrolase</keyword>
<keyword id="KW-0479">Metal-binding</keyword>
<keyword id="KW-0482">Metalloprotease</keyword>
<keyword id="KW-0645">Protease</keyword>
<keyword id="KW-0862">Zinc</keyword>
<comment type="function">
    <text evidence="1">Involved in the modulation of the activity of the glucose-phosphotransferase system (glucose-PTS). Interacts with the transcriptional repressor Mlc, preventing its interaction with DNA and leading to the modulation of expression of genes regulated by Mlc, including ptsG, which encodes the PTS system glucose-specific EIICB component.</text>
</comment>
<comment type="function">
    <text evidence="1">Shows zinc-dependent metallopeptidase activity.</text>
</comment>
<comment type="cofactor">
    <cofactor evidence="1">
        <name>Zn(2+)</name>
        <dbReference type="ChEBI" id="CHEBI:29105"/>
    </cofactor>
    <text evidence="1">Binds 1 zinc ion per subunit.</text>
</comment>
<comment type="subunit">
    <text evidence="1">Interacts with Mlc.</text>
</comment>
<comment type="subcellular location">
    <subcellularLocation>
        <location evidence="1">Cytoplasm</location>
    </subcellularLocation>
</comment>
<comment type="similarity">
    <text evidence="1">Belongs to the MtfA family.</text>
</comment>
<sequence>MIKWPWKVQESAHQTALPWQEALSIPLLTCLTEQEQSKLVTLAERFLQQKRLVPLQGFELDSLRSCRIALLFCLPVLELGLEWLDGFHEVLIYPAPFVVDDEWEDDIGLVHNQRIVQSGQSWQQGPIVLNWLDIQDSFDASGFNLIIHEVAHKLDTRNGDRASGVPFIPLREVAGWEHDLHAAMNNIQEEIELVGENAASIDAYAASDPAECFAVLSEYFFSAPELFAPRFPSLWQRFCQFYQQDPLQRLHRTNDTDSFSATNVH</sequence>
<protein>
    <recommendedName>
        <fullName evidence="1">Mlc titration factor A</fullName>
    </recommendedName>
    <alternativeName>
        <fullName evidence="1">Probable zinc metallopeptidase MtfA</fullName>
        <ecNumber evidence="1">3.4.11.-</ecNumber>
    </alternativeName>
</protein>
<feature type="chain" id="PRO_1000147835" description="Mlc titration factor A">
    <location>
        <begin position="1"/>
        <end position="265"/>
    </location>
</feature>
<feature type="binding site" evidence="1">
    <location>
        <position position="111"/>
    </location>
    <ligand>
        <name>Zn(2+)</name>
        <dbReference type="ChEBI" id="CHEBI:29105"/>
    </ligand>
</feature>
<feature type="binding site" evidence="1">
    <location>
        <position position="148"/>
    </location>
    <ligand>
        <name>Zn(2+)</name>
        <dbReference type="ChEBI" id="CHEBI:29105"/>
    </ligand>
</feature>
<feature type="binding site" evidence="1">
    <location>
        <position position="152"/>
    </location>
    <ligand>
        <name>Zn(2+)</name>
        <dbReference type="ChEBI" id="CHEBI:29105"/>
    </ligand>
</feature>
<feature type="binding site" evidence="1">
    <location>
        <position position="211"/>
    </location>
    <ligand>
        <name>Zn(2+)</name>
        <dbReference type="ChEBI" id="CHEBI:29105"/>
    </ligand>
</feature>
<dbReference type="EC" id="3.4.11.-" evidence="1"/>
<dbReference type="EMBL" id="CU928160">
    <property type="protein sequence ID" value="CAQ98906.1"/>
    <property type="molecule type" value="Genomic_DNA"/>
</dbReference>
<dbReference type="RefSeq" id="WP_001300307.1">
    <property type="nucleotide sequence ID" value="NC_011741.1"/>
</dbReference>
<dbReference type="SMR" id="B7M3B3"/>
<dbReference type="MEROPS" id="M90.001"/>
<dbReference type="KEGG" id="ecr:ECIAI1_2057"/>
<dbReference type="HOGENOM" id="CLU_063037_2_0_6"/>
<dbReference type="GO" id="GO:0005829">
    <property type="term" value="C:cytosol"/>
    <property type="evidence" value="ECO:0007669"/>
    <property type="project" value="TreeGrafter"/>
</dbReference>
<dbReference type="GO" id="GO:0004177">
    <property type="term" value="F:aminopeptidase activity"/>
    <property type="evidence" value="ECO:0007669"/>
    <property type="project" value="UniProtKB-UniRule"/>
</dbReference>
<dbReference type="GO" id="GO:0008237">
    <property type="term" value="F:metallopeptidase activity"/>
    <property type="evidence" value="ECO:0007669"/>
    <property type="project" value="UniProtKB-UniRule"/>
</dbReference>
<dbReference type="GO" id="GO:0008270">
    <property type="term" value="F:zinc ion binding"/>
    <property type="evidence" value="ECO:0007669"/>
    <property type="project" value="UniProtKB-UniRule"/>
</dbReference>
<dbReference type="GO" id="GO:0006508">
    <property type="term" value="P:proteolysis"/>
    <property type="evidence" value="ECO:0007669"/>
    <property type="project" value="UniProtKB-KW"/>
</dbReference>
<dbReference type="CDD" id="cd20169">
    <property type="entry name" value="Peptidase_M90_mtfA"/>
    <property type="match status" value="1"/>
</dbReference>
<dbReference type="FunFam" id="1.10.472.150:FF:000001">
    <property type="entry name" value="Protein MtfA"/>
    <property type="match status" value="1"/>
</dbReference>
<dbReference type="FunFam" id="3.40.390.10:FF:000012">
    <property type="entry name" value="Protein MtfA"/>
    <property type="match status" value="1"/>
</dbReference>
<dbReference type="Gene3D" id="3.40.390.10">
    <property type="entry name" value="Collagenase (Catalytic Domain)"/>
    <property type="match status" value="1"/>
</dbReference>
<dbReference type="Gene3D" id="1.10.472.150">
    <property type="entry name" value="Glucose-regulated metallo-peptidase M90, N-terminal domain"/>
    <property type="match status" value="1"/>
</dbReference>
<dbReference type="HAMAP" id="MF_01593">
    <property type="entry name" value="MtfA"/>
    <property type="match status" value="1"/>
</dbReference>
<dbReference type="InterPro" id="IPR024079">
    <property type="entry name" value="MetalloPept_cat_dom_sf"/>
</dbReference>
<dbReference type="InterPro" id="IPR057256">
    <property type="entry name" value="MtfA_enterob"/>
</dbReference>
<dbReference type="InterPro" id="IPR010384">
    <property type="entry name" value="MtfA_fam"/>
</dbReference>
<dbReference type="InterPro" id="IPR042252">
    <property type="entry name" value="MtfA_N"/>
</dbReference>
<dbReference type="NCBIfam" id="NF011939">
    <property type="entry name" value="PRK15410.1"/>
    <property type="match status" value="1"/>
</dbReference>
<dbReference type="PANTHER" id="PTHR30164">
    <property type="entry name" value="MTFA PEPTIDASE"/>
    <property type="match status" value="1"/>
</dbReference>
<dbReference type="PANTHER" id="PTHR30164:SF2">
    <property type="entry name" value="PROTEIN MTFA"/>
    <property type="match status" value="1"/>
</dbReference>
<dbReference type="Pfam" id="PF06167">
    <property type="entry name" value="Peptidase_M90"/>
    <property type="match status" value="1"/>
</dbReference>
<dbReference type="SUPFAM" id="SSF55486">
    <property type="entry name" value="Metalloproteases ('zincins'), catalytic domain"/>
    <property type="match status" value="1"/>
</dbReference>
<accession>B7M3B3</accession>
<organism>
    <name type="scientific">Escherichia coli O8 (strain IAI1)</name>
    <dbReference type="NCBI Taxonomy" id="585034"/>
    <lineage>
        <taxon>Bacteria</taxon>
        <taxon>Pseudomonadati</taxon>
        <taxon>Pseudomonadota</taxon>
        <taxon>Gammaproteobacteria</taxon>
        <taxon>Enterobacterales</taxon>
        <taxon>Enterobacteriaceae</taxon>
        <taxon>Escherichia</taxon>
    </lineage>
</organism>
<proteinExistence type="inferred from homology"/>
<name>MTFA_ECO8A</name>